<organism>
    <name type="scientific">Burkholderia mallei (strain NCTC 10247)</name>
    <dbReference type="NCBI Taxonomy" id="320389"/>
    <lineage>
        <taxon>Bacteria</taxon>
        <taxon>Pseudomonadati</taxon>
        <taxon>Pseudomonadota</taxon>
        <taxon>Betaproteobacteria</taxon>
        <taxon>Burkholderiales</taxon>
        <taxon>Burkholderiaceae</taxon>
        <taxon>Burkholderia</taxon>
        <taxon>pseudomallei group</taxon>
    </lineage>
</organism>
<gene>
    <name type="primary">bopE</name>
    <name type="ordered locus">BMA10247_A0761</name>
</gene>
<comment type="function">
    <text evidence="1">Activator for both CDC42 and RAC1 by directly interacting with these Rho GTPases and acting as a guanine nucleotide exchange factor (GEF). This activation results in actin cytoskeleton rearrangements and stimulates membrane ruffling, thus promoting bacterial entry into non-phagocytic cells (By similarity).</text>
</comment>
<comment type="subunit">
    <text evidence="1">Monomer. Interacts with human CDC42 (By similarity).</text>
</comment>
<comment type="subcellular location">
    <subcellularLocation>
        <location evidence="1">Secreted</location>
    </subcellularLocation>
    <text evidence="1">Secreted via the bsa type III secretion system.</text>
</comment>
<comment type="similarity">
    <text evidence="2">Belongs to the GEF (guanine exchange factor) SopE family.</text>
</comment>
<proteinExistence type="inferred from homology"/>
<accession>A3MCH6</accession>
<reference key="1">
    <citation type="journal article" date="2010" name="Genome Biol. Evol.">
        <title>Continuing evolution of Burkholderia mallei through genome reduction and large-scale rearrangements.</title>
        <authorList>
            <person name="Losada L."/>
            <person name="Ronning C.M."/>
            <person name="DeShazer D."/>
            <person name="Woods D."/>
            <person name="Fedorova N."/>
            <person name="Kim H.S."/>
            <person name="Shabalina S.A."/>
            <person name="Pearson T.R."/>
            <person name="Brinkac L."/>
            <person name="Tan P."/>
            <person name="Nandi T."/>
            <person name="Crabtree J."/>
            <person name="Badger J."/>
            <person name="Beckstrom-Sternberg S."/>
            <person name="Saqib M."/>
            <person name="Schutzer S.E."/>
            <person name="Keim P."/>
            <person name="Nierman W.C."/>
        </authorList>
    </citation>
    <scope>NUCLEOTIDE SEQUENCE [LARGE SCALE GENOMIC DNA]</scope>
    <source>
        <strain>NCTC 10247</strain>
    </source>
</reference>
<feature type="chain" id="PRO_0000344029" description="Guanine nucleotide exchange factor BopE">
    <location>
        <begin position="1"/>
        <end position="261"/>
    </location>
</feature>
<sequence>MTYNPRIGGFTHVKQASFDVHVKRGEAQPRTSFAQQIKRIFSKIGETLGQLFRHRAPDSAPGRVRLQGVRYVGSYRPTGDAKQAIRHFVDEAVKQVAHTRTPEIRQDAEFGRQVYEATLCAIFSEAKDRFCMDPATRAGNVRPAFIEALGDAARATGLPGADKQGVFTPSGAGTNPLYTEIRLRADTLMGAELAARPEYRELQPYARQQAIDLVANALPAERSNTLVEFRQTVQTLEATYRRAAQDASRDEKGATNAADGA</sequence>
<evidence type="ECO:0000250" key="1"/>
<evidence type="ECO:0000305" key="2"/>
<dbReference type="EMBL" id="CP000547">
    <property type="protein sequence ID" value="ABO03206.1"/>
    <property type="molecule type" value="Genomic_DNA"/>
</dbReference>
<dbReference type="RefSeq" id="WP_004188462.1">
    <property type="nucleotide sequence ID" value="NZ_CP007801.1"/>
</dbReference>
<dbReference type="BMRB" id="A3MCH6"/>
<dbReference type="SMR" id="A3MCH6"/>
<dbReference type="GeneID" id="93063705"/>
<dbReference type="KEGG" id="bmaz:BM44_4985"/>
<dbReference type="KEGG" id="bmn:BMA10247_A0761"/>
<dbReference type="PATRIC" id="fig|320389.8.peg.5721"/>
<dbReference type="GO" id="GO:0005576">
    <property type="term" value="C:extracellular region"/>
    <property type="evidence" value="ECO:0007669"/>
    <property type="project" value="UniProtKB-SubCell"/>
</dbReference>
<dbReference type="GO" id="GO:0005096">
    <property type="term" value="F:GTPase activator activity"/>
    <property type="evidence" value="ECO:0007669"/>
    <property type="project" value="UniProtKB-KW"/>
</dbReference>
<dbReference type="GO" id="GO:0005085">
    <property type="term" value="F:guanyl-nucleotide exchange factor activity"/>
    <property type="evidence" value="ECO:0007669"/>
    <property type="project" value="UniProtKB-KW"/>
</dbReference>
<dbReference type="GO" id="GO:0030036">
    <property type="term" value="P:actin cytoskeleton organization"/>
    <property type="evidence" value="ECO:0007669"/>
    <property type="project" value="InterPro"/>
</dbReference>
<dbReference type="Gene3D" id="1.10.4120.10">
    <property type="entry name" value="SopE-like, GEF domain"/>
    <property type="match status" value="1"/>
</dbReference>
<dbReference type="InterPro" id="IPR005414">
    <property type="entry name" value="SopE"/>
</dbReference>
<dbReference type="InterPro" id="IPR035949">
    <property type="entry name" value="SopE-like_GEF_dom_sf"/>
</dbReference>
<dbReference type="InterPro" id="IPR016019">
    <property type="entry name" value="SopE_GEF_dom"/>
</dbReference>
<dbReference type="NCBIfam" id="NF011808">
    <property type="entry name" value="PRK15278.1"/>
    <property type="match status" value="1"/>
</dbReference>
<dbReference type="Pfam" id="PF07487">
    <property type="entry name" value="SopE_GEF"/>
    <property type="match status" value="1"/>
</dbReference>
<dbReference type="PIRSF" id="PIRSF034781">
    <property type="entry name" value="SecIII_sopE"/>
    <property type="match status" value="1"/>
</dbReference>
<dbReference type="PRINTS" id="PR01593">
    <property type="entry name" value="SOPEPROTEIN"/>
</dbReference>
<dbReference type="SUPFAM" id="SSF81832">
    <property type="entry name" value="SopE-like GEF domain"/>
    <property type="match status" value="1"/>
</dbReference>
<protein>
    <recommendedName>
        <fullName>Guanine nucleotide exchange factor BopE</fullName>
    </recommendedName>
    <alternativeName>
        <fullName>Effector protein BopE</fullName>
    </alternativeName>
</protein>
<name>BOPE_BURM7</name>
<keyword id="KW-0343">GTPase activation</keyword>
<keyword id="KW-0344">Guanine-nucleotide releasing factor</keyword>
<keyword id="KW-0964">Secreted</keyword>
<keyword id="KW-0843">Virulence</keyword>